<sequence length="79" mass="8289">MSGGGVFTDILAAAGRIFEVMVEGHWETVGMLFDSLGKGTMRINRNAYGSMGGGSLRGSSPEVSGYAVPTKEVESKFAK</sequence>
<comment type="function">
    <text>Component of the photosynthetic apparatus. The light harvesting B740 complex binds bacteriochlorophyll c.</text>
</comment>
<comment type="subcellular location">
    <subcellularLocation>
        <location>Chlorosome</location>
        <location>Chlorosome envelope</location>
    </subcellularLocation>
</comment>
<comment type="similarity">
    <text evidence="2">Belongs to the BChl C/E-binding protein family.</text>
</comment>
<keyword id="KW-0076">Bacteriochlorophyll</keyword>
<keyword id="KW-0148">Chlorophyll</keyword>
<keyword id="KW-0151">Chlorosome</keyword>
<keyword id="KW-0157">Chromophore</keyword>
<keyword id="KW-0249">Electron transport</keyword>
<keyword id="KW-0460">Magnesium</keyword>
<keyword id="KW-0479">Metal-binding</keyword>
<keyword id="KW-0602">Photosynthesis</keyword>
<keyword id="KW-0813">Transport</keyword>
<reference key="1">
    <citation type="journal article" date="1994" name="Photosyn. Res.">
        <title>Genes encoding two chlorosome components from the green sulfur bacteria Chlorobium vibrioforme strain 8327D and Chlorobium tepidum.</title>
        <authorList>
            <person name="Chung S."/>
            <person name="Frank G."/>
            <person name="Zuber H."/>
            <person name="Bryant D.A."/>
        </authorList>
    </citation>
    <scope>NUCLEOTIDE SEQUENCE [GENOMIC DNA]</scope>
    <source>
        <strain>8327D</strain>
    </source>
</reference>
<gene>
    <name type="primary">csmA</name>
</gene>
<dbReference type="EMBL" id="U09867">
    <property type="protein sequence ID" value="AAA18796.1"/>
    <property type="molecule type" value="Unassigned_DNA"/>
</dbReference>
<dbReference type="BMRB" id="P0A315"/>
<dbReference type="SMR" id="P0A315"/>
<dbReference type="GO" id="GO:0033105">
    <property type="term" value="C:chlorosome envelope"/>
    <property type="evidence" value="ECO:0007669"/>
    <property type="project" value="UniProtKB-SubCell"/>
</dbReference>
<dbReference type="GO" id="GO:0042314">
    <property type="term" value="F:bacteriochlorophyll binding"/>
    <property type="evidence" value="ECO:0007669"/>
    <property type="project" value="UniProtKB-KW"/>
</dbReference>
<dbReference type="GO" id="GO:0046872">
    <property type="term" value="F:metal ion binding"/>
    <property type="evidence" value="ECO:0007669"/>
    <property type="project" value="UniProtKB-KW"/>
</dbReference>
<dbReference type="GO" id="GO:0015979">
    <property type="term" value="P:photosynthesis"/>
    <property type="evidence" value="ECO:0007669"/>
    <property type="project" value="UniProtKB-KW"/>
</dbReference>
<dbReference type="Gene3D" id="1.20.5.950">
    <property type="entry name" value="bacteriochlorophyll c-binding protein"/>
    <property type="match status" value="1"/>
</dbReference>
<dbReference type="InterPro" id="IPR001470">
    <property type="entry name" value="Bchl_c-bd"/>
</dbReference>
<dbReference type="InterPro" id="IPR038387">
    <property type="entry name" value="Bchl_C-bd_sf"/>
</dbReference>
<dbReference type="Pfam" id="PF02043">
    <property type="entry name" value="Bac_chlorC"/>
    <property type="match status" value="1"/>
</dbReference>
<dbReference type="PIRSF" id="PIRSF002903">
    <property type="entry name" value="Bac_chlorC_bd"/>
    <property type="match status" value="1"/>
</dbReference>
<dbReference type="PRINTS" id="PR00656">
    <property type="entry name" value="BCHLROPHYLLC"/>
</dbReference>
<protein>
    <recommendedName>
        <fullName>Bacteriochlorophyll c-binding protein</fullName>
        <shortName>BChl c-binding</shortName>
    </recommendedName>
    <alternativeName>
        <fullName>Chlorosome protein A</fullName>
    </alternativeName>
</protein>
<accession>P0A315</accession>
<accession>Q46368</accession>
<accession>Q46467</accession>
<evidence type="ECO:0000255" key="1"/>
<evidence type="ECO:0000305" key="2"/>
<organism>
    <name type="scientific">Prosthecochloris vibrioformis</name>
    <name type="common">Chlorobium vibrioforme</name>
    <dbReference type="NCBI Taxonomy" id="1098"/>
    <lineage>
        <taxon>Bacteria</taxon>
        <taxon>Pseudomonadati</taxon>
        <taxon>Chlorobiota</taxon>
        <taxon>Chlorobiia</taxon>
        <taxon>Chlorobiales</taxon>
        <taxon>Chlorobiaceae</taxon>
        <taxon>Prosthecochloris</taxon>
    </lineage>
</organism>
<proteinExistence type="inferred from homology"/>
<feature type="chain" id="PRO_0000002809" description="Bacteriochlorophyll c-binding protein">
    <location>
        <begin position="1"/>
        <end status="unknown"/>
    </location>
</feature>
<feature type="propeptide" id="PRO_0000002810" evidence="1">
    <location>
        <begin status="unknown"/>
        <end position="79"/>
    </location>
</feature>
<feature type="binding site" description="axial binding residue" evidence="1">
    <location>
        <position position="25"/>
    </location>
    <ligand>
        <name>a bacteriochlorophyll c</name>
        <dbReference type="ChEBI" id="CHEBI:60197"/>
    </ligand>
    <ligandPart>
        <name>Mg</name>
        <dbReference type="ChEBI" id="CHEBI:25107"/>
    </ligandPart>
</feature>
<name>CSMA_PROVB</name>